<keyword id="KW-0067">ATP-binding</keyword>
<keyword id="KW-0175">Coiled coil</keyword>
<keyword id="KW-0963">Cytoplasm</keyword>
<keyword id="KW-0418">Kinase</keyword>
<keyword id="KW-0472">Membrane</keyword>
<keyword id="KW-0547">Nucleotide-binding</keyword>
<keyword id="KW-0597">Phosphoprotein</keyword>
<keyword id="KW-1185">Reference proteome</keyword>
<keyword id="KW-0723">Serine/threonine-protein kinase</keyword>
<keyword id="KW-0808">Transferase</keyword>
<keyword id="KW-0926">Vacuole</keyword>
<organism>
    <name type="scientific">Dictyostelium discoideum</name>
    <name type="common">Social amoeba</name>
    <dbReference type="NCBI Taxonomy" id="44689"/>
    <lineage>
        <taxon>Eukaryota</taxon>
        <taxon>Amoebozoa</taxon>
        <taxon>Evosea</taxon>
        <taxon>Eumycetozoa</taxon>
        <taxon>Dictyostelia</taxon>
        <taxon>Dictyosteliales</taxon>
        <taxon>Dictyosteliaceae</taxon>
        <taxon>Dictyostelium</taxon>
    </lineage>
</organism>
<reference key="1">
    <citation type="journal article" date="2005" name="Mol. Biol. Cell">
        <title>Identification and characterization of a novel alpha-kinase with a von Willebrand factor A-like motif localized to the contractile vacuole and Golgi complex in Dictyostelium discoideum.</title>
        <authorList>
            <person name="Betapudi V."/>
            <person name="Mason C."/>
            <person name="Licate L."/>
            <person name="Egelhoff T.T."/>
        </authorList>
    </citation>
    <scope>NUCLEOTIDE SEQUENCE [GENOMIC DNA]</scope>
    <scope>DISRUPTION PHENOTYPE</scope>
    <scope>INTERACTION WITH CALMODULIN</scope>
    <scope>SUBCELLULAR LOCATION</scope>
    <scope>AUTOPHOSPHORYLATION</scope>
    <scope>DEVELOPMENTAL STAGE</scope>
    <scope>FUNCTION</scope>
    <source>
        <strain>AX2</strain>
    </source>
</reference>
<reference key="2">
    <citation type="journal article" date="2005" name="Nature">
        <title>The genome of the social amoeba Dictyostelium discoideum.</title>
        <authorList>
            <person name="Eichinger L."/>
            <person name="Pachebat J.A."/>
            <person name="Gloeckner G."/>
            <person name="Rajandream M.A."/>
            <person name="Sucgang R."/>
            <person name="Berriman M."/>
            <person name="Song J."/>
            <person name="Olsen R."/>
            <person name="Szafranski K."/>
            <person name="Xu Q."/>
            <person name="Tunggal B."/>
            <person name="Kummerfeld S."/>
            <person name="Madera M."/>
            <person name="Konfortov B.A."/>
            <person name="Rivero F."/>
            <person name="Bankier A.T."/>
            <person name="Lehmann R."/>
            <person name="Hamlin N."/>
            <person name="Davies R."/>
            <person name="Gaudet P."/>
            <person name="Fey P."/>
            <person name="Pilcher K."/>
            <person name="Chen G."/>
            <person name="Saunders D."/>
            <person name="Sodergren E.J."/>
            <person name="Davis P."/>
            <person name="Kerhornou A."/>
            <person name="Nie X."/>
            <person name="Hall N."/>
            <person name="Anjard C."/>
            <person name="Hemphill L."/>
            <person name="Bason N."/>
            <person name="Farbrother P."/>
            <person name="Desany B."/>
            <person name="Just E."/>
            <person name="Morio T."/>
            <person name="Rost R."/>
            <person name="Churcher C.M."/>
            <person name="Cooper J."/>
            <person name="Haydock S."/>
            <person name="van Driessche N."/>
            <person name="Cronin A."/>
            <person name="Goodhead I."/>
            <person name="Muzny D.M."/>
            <person name="Mourier T."/>
            <person name="Pain A."/>
            <person name="Lu M."/>
            <person name="Harper D."/>
            <person name="Lindsay R."/>
            <person name="Hauser H."/>
            <person name="James K.D."/>
            <person name="Quiles M."/>
            <person name="Madan Babu M."/>
            <person name="Saito T."/>
            <person name="Buchrieser C."/>
            <person name="Wardroper A."/>
            <person name="Felder M."/>
            <person name="Thangavelu M."/>
            <person name="Johnson D."/>
            <person name="Knights A."/>
            <person name="Loulseged H."/>
            <person name="Mungall K.L."/>
            <person name="Oliver K."/>
            <person name="Price C."/>
            <person name="Quail M.A."/>
            <person name="Urushihara H."/>
            <person name="Hernandez J."/>
            <person name="Rabbinowitsch E."/>
            <person name="Steffen D."/>
            <person name="Sanders M."/>
            <person name="Ma J."/>
            <person name="Kohara Y."/>
            <person name="Sharp S."/>
            <person name="Simmonds M.N."/>
            <person name="Spiegler S."/>
            <person name="Tivey A."/>
            <person name="Sugano S."/>
            <person name="White B."/>
            <person name="Walker D."/>
            <person name="Woodward J.R."/>
            <person name="Winckler T."/>
            <person name="Tanaka Y."/>
            <person name="Shaulsky G."/>
            <person name="Schleicher M."/>
            <person name="Weinstock G.M."/>
            <person name="Rosenthal A."/>
            <person name="Cox E.C."/>
            <person name="Chisholm R.L."/>
            <person name="Gibbs R.A."/>
            <person name="Loomis W.F."/>
            <person name="Platzer M."/>
            <person name="Kay R.R."/>
            <person name="Williams J.G."/>
            <person name="Dear P.H."/>
            <person name="Noegel A.A."/>
            <person name="Barrell B.G."/>
            <person name="Kuspa A."/>
        </authorList>
    </citation>
    <scope>NUCLEOTIDE SEQUENCE [LARGE SCALE GENOMIC DNA]</scope>
    <source>
        <strain>AX4</strain>
    </source>
</reference>
<reference key="3">
    <citation type="journal article" date="2008" name="Biochim. Biophys. Acta">
        <title>Determinants for substrate phosphorylation by Dictyostelium myosin II heavy chain kinases A and B and eukaryotic elongation factor-2 kinase.</title>
        <authorList>
            <person name="Crawley S.W."/>
            <person name="Cote G.P."/>
        </authorList>
    </citation>
    <scope>FUNCTION</scope>
    <scope>CHARACTERIZATION</scope>
</reference>
<reference key="4">
    <citation type="journal article" date="2008" name="Cell. Signal.">
        <title>Calmodulin-binding proteins in the model organism Dictyostelium: a complete &amp; critical review.</title>
        <authorList>
            <person name="Catalano A."/>
            <person name="O'Day D.H."/>
        </authorList>
    </citation>
    <scope>INTERACTION WITH CALMODULIN</scope>
</reference>
<feature type="chain" id="PRO_0000363923" description="Alpha-protein kinase vwkA">
    <location>
        <begin position="1"/>
        <end position="625"/>
    </location>
</feature>
<feature type="domain" description="VWFA">
    <location>
        <begin position="122"/>
        <end position="322"/>
    </location>
</feature>
<feature type="domain" description="Alpha-type protein kinase" evidence="3">
    <location>
        <begin position="386"/>
        <end position="600"/>
    </location>
</feature>
<feature type="region of interest" description="Disordered" evidence="4">
    <location>
        <begin position="1"/>
        <end position="64"/>
    </location>
</feature>
<feature type="region of interest" description="Disordered" evidence="4">
    <location>
        <begin position="602"/>
        <end position="625"/>
    </location>
</feature>
<feature type="coiled-coil region" evidence="2">
    <location>
        <begin position="87"/>
        <end position="114"/>
    </location>
</feature>
<feature type="compositionally biased region" description="Basic and acidic residues" evidence="4">
    <location>
        <begin position="1"/>
        <end position="15"/>
    </location>
</feature>
<feature type="compositionally biased region" description="Polar residues" evidence="4">
    <location>
        <begin position="25"/>
        <end position="39"/>
    </location>
</feature>
<feature type="compositionally biased region" description="Polar residues" evidence="4">
    <location>
        <begin position="46"/>
        <end position="63"/>
    </location>
</feature>
<feature type="binding site" evidence="1">
    <location>
        <begin position="570"/>
        <end position="576"/>
    </location>
    <ligand>
        <name>ATP</name>
        <dbReference type="ChEBI" id="CHEBI:30616"/>
    </ligand>
</feature>
<proteinExistence type="evidence at protein level"/>
<dbReference type="EC" id="2.7.11.1"/>
<dbReference type="EMBL" id="AY672633">
    <property type="protein sequence ID" value="AAT76981.1"/>
    <property type="molecule type" value="Genomic_DNA"/>
</dbReference>
<dbReference type="EMBL" id="AAFI02000003">
    <property type="protein sequence ID" value="EAL73525.1"/>
    <property type="molecule type" value="Genomic_DNA"/>
</dbReference>
<dbReference type="RefSeq" id="XP_647583.1">
    <property type="nucleotide sequence ID" value="XM_642491.1"/>
</dbReference>
<dbReference type="SMR" id="Q6B9X6"/>
<dbReference type="STRING" id="44689.Q6B9X6"/>
<dbReference type="PaxDb" id="44689-DDB0216405"/>
<dbReference type="EnsemblProtists" id="EAL73525">
    <property type="protein sequence ID" value="EAL73525"/>
    <property type="gene ID" value="DDB_G0268144"/>
</dbReference>
<dbReference type="GeneID" id="8616395"/>
<dbReference type="KEGG" id="ddi:DDB_G0268144"/>
<dbReference type="dictyBase" id="DDB_G0268144">
    <property type="gene designation" value="vwkA"/>
</dbReference>
<dbReference type="VEuPathDB" id="AmoebaDB:DDB_G0268144"/>
<dbReference type="eggNOG" id="ENOG502QVA3">
    <property type="taxonomic scope" value="Eukaryota"/>
</dbReference>
<dbReference type="HOGENOM" id="CLU_026740_0_0_1"/>
<dbReference type="InParanoid" id="Q6B9X6"/>
<dbReference type="OMA" id="AHDDNIK"/>
<dbReference type="PhylomeDB" id="Q6B9X6"/>
<dbReference type="PRO" id="PR:Q6B9X6"/>
<dbReference type="Proteomes" id="UP000002195">
    <property type="component" value="Chromosome 1"/>
</dbReference>
<dbReference type="GO" id="GO:0031164">
    <property type="term" value="C:contractile vacuolar membrane"/>
    <property type="evidence" value="ECO:0007669"/>
    <property type="project" value="UniProtKB-SubCell"/>
</dbReference>
<dbReference type="GO" id="GO:0000331">
    <property type="term" value="C:contractile vacuole"/>
    <property type="evidence" value="ECO:0000314"/>
    <property type="project" value="dictyBase"/>
</dbReference>
<dbReference type="GO" id="GO:0005737">
    <property type="term" value="C:cytoplasm"/>
    <property type="evidence" value="ECO:0000314"/>
    <property type="project" value="dictyBase"/>
</dbReference>
<dbReference type="GO" id="GO:0005829">
    <property type="term" value="C:cytosol"/>
    <property type="evidence" value="ECO:0007669"/>
    <property type="project" value="UniProtKB-SubCell"/>
</dbReference>
<dbReference type="GO" id="GO:0048471">
    <property type="term" value="C:perinuclear region of cytoplasm"/>
    <property type="evidence" value="ECO:0000314"/>
    <property type="project" value="dictyBase"/>
</dbReference>
<dbReference type="GO" id="GO:0005524">
    <property type="term" value="F:ATP binding"/>
    <property type="evidence" value="ECO:0007669"/>
    <property type="project" value="UniProtKB-KW"/>
</dbReference>
<dbReference type="GO" id="GO:0005516">
    <property type="term" value="F:calmodulin binding"/>
    <property type="evidence" value="ECO:0000314"/>
    <property type="project" value="dictyBase"/>
</dbReference>
<dbReference type="GO" id="GO:0004672">
    <property type="term" value="F:protein kinase activity"/>
    <property type="evidence" value="ECO:0000314"/>
    <property type="project" value="dictyBase"/>
</dbReference>
<dbReference type="GO" id="GO:0106310">
    <property type="term" value="F:protein serine kinase activity"/>
    <property type="evidence" value="ECO:0007669"/>
    <property type="project" value="RHEA"/>
</dbReference>
<dbReference type="GO" id="GO:0004674">
    <property type="term" value="F:protein serine/threonine kinase activity"/>
    <property type="evidence" value="ECO:0000314"/>
    <property type="project" value="dictyBase"/>
</dbReference>
<dbReference type="GO" id="GO:0070177">
    <property type="term" value="P:contractile vacuole discharge"/>
    <property type="evidence" value="ECO:0000315"/>
    <property type="project" value="dictyBase"/>
</dbReference>
<dbReference type="GO" id="GO:0033298">
    <property type="term" value="P:contractile vacuole organization"/>
    <property type="evidence" value="ECO:0000315"/>
    <property type="project" value="dictyBase"/>
</dbReference>
<dbReference type="GO" id="GO:0006971">
    <property type="term" value="P:hypotonic response"/>
    <property type="evidence" value="ECO:0000315"/>
    <property type="project" value="dictyBase"/>
</dbReference>
<dbReference type="GO" id="GO:0000281">
    <property type="term" value="P:mitotic cytokinesis"/>
    <property type="evidence" value="ECO:0000315"/>
    <property type="project" value="dictyBase"/>
</dbReference>
<dbReference type="GO" id="GO:0031038">
    <property type="term" value="P:myosin II filament organization"/>
    <property type="evidence" value="ECO:0000315"/>
    <property type="project" value="dictyBase"/>
</dbReference>
<dbReference type="GO" id="GO:0031156">
    <property type="term" value="P:regulation of sorocarp development"/>
    <property type="evidence" value="ECO:0000315"/>
    <property type="project" value="dictyBase"/>
</dbReference>
<dbReference type="GO" id="GO:0031288">
    <property type="term" value="P:sorocarp morphogenesis"/>
    <property type="evidence" value="ECO:0000315"/>
    <property type="project" value="dictyBase"/>
</dbReference>
<dbReference type="CDD" id="cd16970">
    <property type="entry name" value="Alpha_kinase_VwkA_like"/>
    <property type="match status" value="1"/>
</dbReference>
<dbReference type="FunFam" id="3.30.200.20:FF:001043">
    <property type="entry name" value="Alpha-protein kinase vwkA"/>
    <property type="match status" value="1"/>
</dbReference>
<dbReference type="FunFam" id="3.40.50.410:FF:000135">
    <property type="entry name" value="Alpha-protein kinase vwkA"/>
    <property type="match status" value="1"/>
</dbReference>
<dbReference type="Gene3D" id="3.20.200.10">
    <property type="entry name" value="MHCK/EF2 kinase"/>
    <property type="match status" value="1"/>
</dbReference>
<dbReference type="Gene3D" id="3.30.200.20">
    <property type="entry name" value="Phosphorylase Kinase, domain 1"/>
    <property type="match status" value="1"/>
</dbReference>
<dbReference type="Gene3D" id="3.40.50.410">
    <property type="entry name" value="von Willebrand factor, type A domain"/>
    <property type="match status" value="1"/>
</dbReference>
<dbReference type="InterPro" id="IPR004166">
    <property type="entry name" value="a-kinase_dom"/>
</dbReference>
<dbReference type="InterPro" id="IPR011009">
    <property type="entry name" value="Kinase-like_dom_sf"/>
</dbReference>
<dbReference type="InterPro" id="IPR052969">
    <property type="entry name" value="Thr-specific_kinase-like"/>
</dbReference>
<dbReference type="InterPro" id="IPR036465">
    <property type="entry name" value="vWFA_dom_sf"/>
</dbReference>
<dbReference type="PANTHER" id="PTHR47763">
    <property type="entry name" value="ALPHA-PROTEIN KINASE VWKA"/>
    <property type="match status" value="1"/>
</dbReference>
<dbReference type="PANTHER" id="PTHR47763:SF4">
    <property type="entry name" value="ALPHA-PROTEIN KINASE VWKA"/>
    <property type="match status" value="1"/>
</dbReference>
<dbReference type="Pfam" id="PF02816">
    <property type="entry name" value="Alpha_kinase"/>
    <property type="match status" value="1"/>
</dbReference>
<dbReference type="SMART" id="SM00811">
    <property type="entry name" value="Alpha_kinase"/>
    <property type="match status" value="1"/>
</dbReference>
<dbReference type="SUPFAM" id="SSF56112">
    <property type="entry name" value="Protein kinase-like (PK-like)"/>
    <property type="match status" value="1"/>
</dbReference>
<dbReference type="SUPFAM" id="SSF53300">
    <property type="entry name" value="vWA-like"/>
    <property type="match status" value="1"/>
</dbReference>
<dbReference type="PROSITE" id="PS51158">
    <property type="entry name" value="ALPHA_KINASE"/>
    <property type="match status" value="1"/>
</dbReference>
<gene>
    <name type="primary">vwkA</name>
    <name type="ORF">DDB_G0268144</name>
</gene>
<comment type="function">
    <text evidence="5 7">Displays a modest preference for threonine over serine residues. Does not phosphorylate myosin II, however can phosphorylate MBP, in vitro. May be involved in the regulation of myosin II function during cytokinesis. Overexpression leads to impaired cell proliferation in suspension culture and fails to develop beyond the mound stage. Both overexpression and absence of the gene can result in defects in cytokinesis and alterations in myosin II abundance and assembly.</text>
</comment>
<comment type="catalytic activity">
    <reaction>
        <text>L-seryl-[protein] + ATP = O-phospho-L-seryl-[protein] + ADP + H(+)</text>
        <dbReference type="Rhea" id="RHEA:17989"/>
        <dbReference type="Rhea" id="RHEA-COMP:9863"/>
        <dbReference type="Rhea" id="RHEA-COMP:11604"/>
        <dbReference type="ChEBI" id="CHEBI:15378"/>
        <dbReference type="ChEBI" id="CHEBI:29999"/>
        <dbReference type="ChEBI" id="CHEBI:30616"/>
        <dbReference type="ChEBI" id="CHEBI:83421"/>
        <dbReference type="ChEBI" id="CHEBI:456216"/>
        <dbReference type="EC" id="2.7.11.1"/>
    </reaction>
</comment>
<comment type="catalytic activity">
    <reaction>
        <text>L-threonyl-[protein] + ATP = O-phospho-L-threonyl-[protein] + ADP + H(+)</text>
        <dbReference type="Rhea" id="RHEA:46608"/>
        <dbReference type="Rhea" id="RHEA-COMP:11060"/>
        <dbReference type="Rhea" id="RHEA-COMP:11605"/>
        <dbReference type="ChEBI" id="CHEBI:15378"/>
        <dbReference type="ChEBI" id="CHEBI:30013"/>
        <dbReference type="ChEBI" id="CHEBI:30616"/>
        <dbReference type="ChEBI" id="CHEBI:61977"/>
        <dbReference type="ChEBI" id="CHEBI:456216"/>
        <dbReference type="EC" id="2.7.11.1"/>
    </reaction>
</comment>
<comment type="activity regulation">
    <text>Autophosphorylation activity enhanced by calcium/calmodulin.</text>
</comment>
<comment type="subunit">
    <text evidence="5 6">Interacts with calmodulin; in the presence of calcium.</text>
</comment>
<comment type="subcellular location">
    <subcellularLocation>
        <location evidence="5">Cytoplasm</location>
        <location evidence="5">Cytosol</location>
    </subcellularLocation>
    <subcellularLocation>
        <location evidence="5">Cytoplasm</location>
        <location evidence="5">Perinuclear region</location>
    </subcellularLocation>
    <subcellularLocation>
        <location evidence="5">Contractile vacuole membrane</location>
    </subcellularLocation>
    <text>Enriched adjacent to large spherical structures such as contractile vacuoles and Golgi-like structures (perinuclear).</text>
</comment>
<comment type="developmental stage">
    <text evidence="5">Expressed continuously throughout development. Low expression (at protein level).</text>
</comment>
<comment type="PTM">
    <text>Autophosphorylated, in vitro.</text>
</comment>
<comment type="disruption phenotype">
    <text evidence="5">Impaired development, multinucleation, fruiting body formation that is delayed by 36-48 hours during the development in addition to stalks and spores that are thin and smaller.</text>
</comment>
<comment type="similarity">
    <text evidence="8">Belongs to the protein kinase superfamily. Alpha-type protein kinase family. ALPK subfamily.</text>
</comment>
<sequence>MESKYVLSTEKESKTKPSGRVNVSDMDSISNSLSKTSLGTRKVPTSLKTDASRSGLSSGGSKTHISDESALRMVYGSTPRDEKTTTTKDSITLAKEKEKKIEKRNEEIKLTFKAIRASECVDLLFIVDCTGSMDPYIEQIKSDIVKLQEALKLKHSFLDIEFGFIRYTDFDVASNRCSTFQFSRSTVEFVRFVSEIRAGGGADGPEDVFGGMDLIKSMKWRPNSTRVVIHIADAPCHGTEYHSMADSYPGGDPNGIKLDDLLTDIISLNINYYFGHINLKETGQMIDFFDKKTKEISRNKKSINSFDSKETSKMNERIFISIEESISVSRSVLTEQYLGHNIDGSTGKQRSEREFEINTNMDIDFGELPYIQMLQTKFKMPSDIVTCLSSSYEMKLNEITISIKIAPNPFSHGACRLAYLGIDEHGKKVVLKQSKYIGGRENSKKRYFESMECQTVAAKFALEFNKQLSLTSSEHQITFTVAKVLQMKHSEKPMYFGIETFINGEYQKYNSNCGWLKDDAMSEILQTFSHWTYQESKNKAIVVDIQGVKTSKGYLLTDPAIHSTDTLRFGSCNLGKPGIIKFFQSHKCNQHCKKLGLTIPSFTSSSSTSSSSRSTSSSSSISYSY</sequence>
<protein>
    <recommendedName>
        <fullName>Alpha-protein kinase vwkA</fullName>
        <ecNumber>2.7.11.1</ecNumber>
    </recommendedName>
    <alternativeName>
        <fullName>von Willebrand factor A alpha-kinase</fullName>
        <shortName>vWF kinase</shortName>
    </alternativeName>
</protein>
<name>VWKA_DICDI</name>
<evidence type="ECO:0000250" key="1"/>
<evidence type="ECO:0000255" key="2"/>
<evidence type="ECO:0000255" key="3">
    <source>
        <dbReference type="PROSITE-ProRule" id="PRU00501"/>
    </source>
</evidence>
<evidence type="ECO:0000256" key="4">
    <source>
        <dbReference type="SAM" id="MobiDB-lite"/>
    </source>
</evidence>
<evidence type="ECO:0000269" key="5">
    <source>
    </source>
</evidence>
<evidence type="ECO:0000269" key="6">
    <source>
    </source>
</evidence>
<evidence type="ECO:0000269" key="7">
    <source>
    </source>
</evidence>
<evidence type="ECO:0000305" key="8"/>
<accession>Q6B9X6</accession>
<accession>Q55FF0</accession>